<sequence length="207" mass="23817">MPQRKISFYRLLPLATLLLAACSTTPPSGPATSPTSPQWRQHEQQLRQLSQFQTRGAFAYLSEKQKVYARFFWQQTAPERYRLLLTNPLGSTELELVVQPGVTQLTDNQGKRHVSNDPQEMIQKLTGMSIPLESLRQWILGLPGDTTDFTLDDKYRLKQLTYQQDGVTWVVDYQEYNTQVTPALPSRMELSQGGQRIKLKMDNWTVK</sequence>
<proteinExistence type="inferred from homology"/>
<accession>A1JRU9</accession>
<name>LOLB_YERE8</name>
<organism>
    <name type="scientific">Yersinia enterocolitica serotype O:8 / biotype 1B (strain NCTC 13174 / 8081)</name>
    <dbReference type="NCBI Taxonomy" id="393305"/>
    <lineage>
        <taxon>Bacteria</taxon>
        <taxon>Pseudomonadati</taxon>
        <taxon>Pseudomonadota</taxon>
        <taxon>Gammaproteobacteria</taxon>
        <taxon>Enterobacterales</taxon>
        <taxon>Yersiniaceae</taxon>
        <taxon>Yersinia</taxon>
    </lineage>
</organism>
<reference key="1">
    <citation type="journal article" date="2006" name="PLoS Genet.">
        <title>The complete genome sequence and comparative genome analysis of the high pathogenicity Yersinia enterocolitica strain 8081.</title>
        <authorList>
            <person name="Thomson N.R."/>
            <person name="Howard S."/>
            <person name="Wren B.W."/>
            <person name="Holden M.T.G."/>
            <person name="Crossman L."/>
            <person name="Challis G.L."/>
            <person name="Churcher C."/>
            <person name="Mungall K."/>
            <person name="Brooks K."/>
            <person name="Chillingworth T."/>
            <person name="Feltwell T."/>
            <person name="Abdellah Z."/>
            <person name="Hauser H."/>
            <person name="Jagels K."/>
            <person name="Maddison M."/>
            <person name="Moule S."/>
            <person name="Sanders M."/>
            <person name="Whitehead S."/>
            <person name="Quail M.A."/>
            <person name="Dougan G."/>
            <person name="Parkhill J."/>
            <person name="Prentice M.B."/>
        </authorList>
    </citation>
    <scope>NUCLEOTIDE SEQUENCE [LARGE SCALE GENOMIC DNA]</scope>
    <source>
        <strain>NCTC 13174 / 8081</strain>
    </source>
</reference>
<keyword id="KW-0998">Cell outer membrane</keyword>
<keyword id="KW-0143">Chaperone</keyword>
<keyword id="KW-0449">Lipoprotein</keyword>
<keyword id="KW-0472">Membrane</keyword>
<keyword id="KW-0564">Palmitate</keyword>
<keyword id="KW-0653">Protein transport</keyword>
<keyword id="KW-0732">Signal</keyword>
<keyword id="KW-0813">Transport</keyword>
<gene>
    <name evidence="1" type="primary">lolB</name>
    <name type="ordered locus">YE2433</name>
</gene>
<protein>
    <recommendedName>
        <fullName evidence="1">Outer-membrane lipoprotein LolB</fullName>
    </recommendedName>
</protein>
<dbReference type="EMBL" id="AM286415">
    <property type="protein sequence ID" value="CAL12480.1"/>
    <property type="molecule type" value="Genomic_DNA"/>
</dbReference>
<dbReference type="RefSeq" id="WP_011816542.1">
    <property type="nucleotide sequence ID" value="NC_008800.1"/>
</dbReference>
<dbReference type="RefSeq" id="YP_001006646.1">
    <property type="nucleotide sequence ID" value="NC_008800.1"/>
</dbReference>
<dbReference type="SMR" id="A1JRU9"/>
<dbReference type="KEGG" id="yen:YE2433"/>
<dbReference type="PATRIC" id="fig|393305.7.peg.2584"/>
<dbReference type="eggNOG" id="COG3017">
    <property type="taxonomic scope" value="Bacteria"/>
</dbReference>
<dbReference type="HOGENOM" id="CLU_092816_1_1_6"/>
<dbReference type="OrthoDB" id="9797618at2"/>
<dbReference type="Proteomes" id="UP000000642">
    <property type="component" value="Chromosome"/>
</dbReference>
<dbReference type="GO" id="GO:0009279">
    <property type="term" value="C:cell outer membrane"/>
    <property type="evidence" value="ECO:0007669"/>
    <property type="project" value="UniProtKB-SubCell"/>
</dbReference>
<dbReference type="GO" id="GO:0044874">
    <property type="term" value="P:lipoprotein localization to outer membrane"/>
    <property type="evidence" value="ECO:0007669"/>
    <property type="project" value="UniProtKB-UniRule"/>
</dbReference>
<dbReference type="GO" id="GO:0015031">
    <property type="term" value="P:protein transport"/>
    <property type="evidence" value="ECO:0007669"/>
    <property type="project" value="UniProtKB-KW"/>
</dbReference>
<dbReference type="CDD" id="cd16326">
    <property type="entry name" value="LolB"/>
    <property type="match status" value="1"/>
</dbReference>
<dbReference type="Gene3D" id="2.50.20.10">
    <property type="entry name" value="Lipoprotein localisation LolA/LolB/LppX"/>
    <property type="match status" value="1"/>
</dbReference>
<dbReference type="HAMAP" id="MF_00233">
    <property type="entry name" value="LolB"/>
    <property type="match status" value="1"/>
</dbReference>
<dbReference type="InterPro" id="IPR029046">
    <property type="entry name" value="LolA/LolB/LppX"/>
</dbReference>
<dbReference type="InterPro" id="IPR004565">
    <property type="entry name" value="OM_lipoprot_LolB"/>
</dbReference>
<dbReference type="NCBIfam" id="TIGR00548">
    <property type="entry name" value="lolB"/>
    <property type="match status" value="1"/>
</dbReference>
<dbReference type="Pfam" id="PF03550">
    <property type="entry name" value="LolB"/>
    <property type="match status" value="1"/>
</dbReference>
<dbReference type="SUPFAM" id="SSF89392">
    <property type="entry name" value="Prokaryotic lipoproteins and lipoprotein localization factors"/>
    <property type="match status" value="1"/>
</dbReference>
<dbReference type="PROSITE" id="PS51257">
    <property type="entry name" value="PROKAR_LIPOPROTEIN"/>
    <property type="match status" value="1"/>
</dbReference>
<evidence type="ECO:0000255" key="1">
    <source>
        <dbReference type="HAMAP-Rule" id="MF_00233"/>
    </source>
</evidence>
<comment type="function">
    <text evidence="1">Plays a critical role in the incorporation of lipoproteins in the outer membrane after they are released by the LolA protein.</text>
</comment>
<comment type="subunit">
    <text evidence="1">Monomer.</text>
</comment>
<comment type="subcellular location">
    <subcellularLocation>
        <location evidence="1">Cell outer membrane</location>
        <topology evidence="1">Lipid-anchor</topology>
    </subcellularLocation>
</comment>
<comment type="similarity">
    <text evidence="1">Belongs to the LolB family.</text>
</comment>
<feature type="signal peptide" evidence="1">
    <location>
        <begin position="1"/>
        <end position="21"/>
    </location>
</feature>
<feature type="chain" id="PRO_1000021694" description="Outer-membrane lipoprotein LolB">
    <location>
        <begin position="22"/>
        <end position="207"/>
    </location>
</feature>
<feature type="lipid moiety-binding region" description="N-palmitoyl cysteine" evidence="1">
    <location>
        <position position="22"/>
    </location>
</feature>
<feature type="lipid moiety-binding region" description="S-diacylglycerol cysteine" evidence="1">
    <location>
        <position position="22"/>
    </location>
</feature>